<dbReference type="EC" id="2.3.1.266" evidence="1 2"/>
<dbReference type="EMBL" id="AE006468">
    <property type="protein sequence ID" value="AAL23373.1"/>
    <property type="molecule type" value="Genomic_DNA"/>
</dbReference>
<dbReference type="RefSeq" id="NP_463414.1">
    <property type="nucleotide sequence ID" value="NC_003197.2"/>
</dbReference>
<dbReference type="RefSeq" id="WP_001092436.1">
    <property type="nucleotide sequence ID" value="NC_003197.2"/>
</dbReference>
<dbReference type="PDB" id="2CNM">
    <property type="method" value="X-ray"/>
    <property type="resolution" value="2.60 A"/>
    <property type="chains" value="A/B/C=1-148"/>
</dbReference>
<dbReference type="PDB" id="2CNS">
    <property type="method" value="X-ray"/>
    <property type="resolution" value="2.50 A"/>
    <property type="chains" value="A/B/C=1-148"/>
</dbReference>
<dbReference type="PDB" id="2CNT">
    <property type="method" value="X-ray"/>
    <property type="resolution" value="2.40 A"/>
    <property type="chains" value="A/B/C/D=1-148"/>
</dbReference>
<dbReference type="PDBsum" id="2CNM"/>
<dbReference type="PDBsum" id="2CNS"/>
<dbReference type="PDBsum" id="2CNT"/>
<dbReference type="SMR" id="Q8ZJW4"/>
<dbReference type="STRING" id="99287.STM4558"/>
<dbReference type="PaxDb" id="99287-STM4558"/>
<dbReference type="GeneID" id="1256084"/>
<dbReference type="KEGG" id="stm:STM4558"/>
<dbReference type="PATRIC" id="fig|99287.12.peg.4799"/>
<dbReference type="HOGENOM" id="CLU_013985_23_2_6"/>
<dbReference type="OMA" id="GERYLNY"/>
<dbReference type="PhylomeDB" id="Q8ZJW4"/>
<dbReference type="BioCyc" id="SENT99287:STM4558-MONOMER"/>
<dbReference type="BRENDA" id="2.3.1.266">
    <property type="organism ID" value="5542"/>
</dbReference>
<dbReference type="EvolutionaryTrace" id="Q8ZJW4"/>
<dbReference type="Proteomes" id="UP000001014">
    <property type="component" value="Chromosome"/>
</dbReference>
<dbReference type="GO" id="GO:0005737">
    <property type="term" value="C:cytoplasm"/>
    <property type="evidence" value="ECO:0007669"/>
    <property type="project" value="UniProtKB-SubCell"/>
</dbReference>
<dbReference type="GO" id="GO:0008999">
    <property type="term" value="F:protein-N-terminal-alanine acetyltransferase activity"/>
    <property type="evidence" value="ECO:0000318"/>
    <property type="project" value="GO_Central"/>
</dbReference>
<dbReference type="CDD" id="cd04301">
    <property type="entry name" value="NAT_SF"/>
    <property type="match status" value="1"/>
</dbReference>
<dbReference type="FunFam" id="3.40.630.30:FF:000018">
    <property type="entry name" value="[Ribosomal protein S18]-alanine N-acetyltransferase"/>
    <property type="match status" value="1"/>
</dbReference>
<dbReference type="Gene3D" id="3.40.630.30">
    <property type="match status" value="1"/>
</dbReference>
<dbReference type="HAMAP" id="MF_02210">
    <property type="entry name" value="RimI"/>
    <property type="match status" value="1"/>
</dbReference>
<dbReference type="InterPro" id="IPR006464">
    <property type="entry name" value="AcTrfase_RimI/Ard1"/>
</dbReference>
<dbReference type="InterPro" id="IPR016181">
    <property type="entry name" value="Acyl_CoA_acyltransferase"/>
</dbReference>
<dbReference type="InterPro" id="IPR000182">
    <property type="entry name" value="GNAT_dom"/>
</dbReference>
<dbReference type="InterPro" id="IPR043690">
    <property type="entry name" value="RimI"/>
</dbReference>
<dbReference type="InterPro" id="IPR050680">
    <property type="entry name" value="YpeA/RimI_acetyltransf"/>
</dbReference>
<dbReference type="NCBIfam" id="NF007025">
    <property type="entry name" value="PRK09491.1"/>
    <property type="match status" value="1"/>
</dbReference>
<dbReference type="NCBIfam" id="TIGR01575">
    <property type="entry name" value="rimI"/>
    <property type="match status" value="1"/>
</dbReference>
<dbReference type="PANTHER" id="PTHR43420">
    <property type="entry name" value="ACETYLTRANSFERASE"/>
    <property type="match status" value="1"/>
</dbReference>
<dbReference type="PANTHER" id="PTHR43420:SF51">
    <property type="entry name" value="PEPTIDYL-LYSINE N-ACETYLTRANSFERASE YIAC"/>
    <property type="match status" value="1"/>
</dbReference>
<dbReference type="Pfam" id="PF00583">
    <property type="entry name" value="Acetyltransf_1"/>
    <property type="match status" value="1"/>
</dbReference>
<dbReference type="SUPFAM" id="SSF55729">
    <property type="entry name" value="Acyl-CoA N-acyltransferases (Nat)"/>
    <property type="match status" value="1"/>
</dbReference>
<dbReference type="PROSITE" id="PS51186">
    <property type="entry name" value="GNAT"/>
    <property type="match status" value="1"/>
</dbReference>
<keyword id="KW-0002">3D-structure</keyword>
<keyword id="KW-0012">Acyltransferase</keyword>
<keyword id="KW-0963">Cytoplasm</keyword>
<keyword id="KW-1185">Reference proteome</keyword>
<keyword id="KW-0808">Transferase</keyword>
<proteinExistence type="evidence at protein level"/>
<feature type="chain" id="PRO_0000446679" description="[Ribosomal protein bS18]-alanine N-acetyltransferase">
    <location>
        <begin position="1"/>
        <end position="148"/>
    </location>
</feature>
<feature type="domain" description="N-acetyltransferase" evidence="1">
    <location>
        <begin position="2"/>
        <end position="147"/>
    </location>
</feature>
<feature type="active site" description="Proton acceptor" evidence="1 5">
    <location>
        <position position="103"/>
    </location>
</feature>
<feature type="active site" description="Proton donor" evidence="1 5">
    <location>
        <position position="115"/>
    </location>
</feature>
<feature type="binding site" evidence="1 2">
    <location>
        <begin position="69"/>
        <end position="71"/>
    </location>
    <ligand>
        <name>acetyl-CoA</name>
        <dbReference type="ChEBI" id="CHEBI:57288"/>
    </ligand>
</feature>
<feature type="binding site" evidence="1 2">
    <location>
        <begin position="77"/>
        <end position="82"/>
    </location>
    <ligand>
        <name>acetyl-CoA</name>
        <dbReference type="ChEBI" id="CHEBI:57288"/>
    </ligand>
</feature>
<feature type="binding site" evidence="1 2">
    <location>
        <position position="108"/>
    </location>
    <ligand>
        <name>acetyl-CoA</name>
        <dbReference type="ChEBI" id="CHEBI:57288"/>
    </ligand>
</feature>
<feature type="strand" evidence="10">
    <location>
        <begin position="2"/>
        <end position="6"/>
    </location>
</feature>
<feature type="helix" evidence="10">
    <location>
        <begin position="9"/>
        <end position="11"/>
    </location>
</feature>
<feature type="helix" evidence="10">
    <location>
        <begin position="12"/>
        <end position="22"/>
    </location>
</feature>
<feature type="helix" evidence="10">
    <location>
        <begin position="29"/>
        <end position="34"/>
    </location>
</feature>
<feature type="strand" evidence="10">
    <location>
        <begin position="43"/>
        <end position="47"/>
    </location>
</feature>
<feature type="strand" evidence="10">
    <location>
        <begin position="50"/>
        <end position="60"/>
    </location>
</feature>
<feature type="strand" evidence="10">
    <location>
        <begin position="63"/>
        <end position="71"/>
    </location>
</feature>
<feature type="helix" evidence="10">
    <location>
        <begin position="73"/>
        <end position="75"/>
    </location>
</feature>
<feature type="strand" evidence="10">
    <location>
        <begin position="77"/>
        <end position="79"/>
    </location>
</feature>
<feature type="helix" evidence="10">
    <location>
        <begin position="80"/>
        <end position="94"/>
    </location>
</feature>
<feature type="strand" evidence="10">
    <location>
        <begin position="99"/>
        <end position="105"/>
    </location>
</feature>
<feature type="helix" evidence="10">
    <location>
        <begin position="109"/>
        <end position="118"/>
    </location>
</feature>
<feature type="strand" evidence="10">
    <location>
        <begin position="121"/>
        <end position="132"/>
    </location>
</feature>
<feature type="strand" evidence="10">
    <location>
        <begin position="135"/>
        <end position="145"/>
    </location>
</feature>
<sequence>MNTISILSTTDLPAAWQIEQRAHAFPWSEKTFFGNQGERYLNLKLTADDRMAAFAITQVVLDEATLFNIAVDPDFQRRGLGRMLLEHLIDELETRGVVTLWLEVRASNAAAIALYESLGFNEATIRRNYYPTAQGHEDAIIMALPISM</sequence>
<organism>
    <name type="scientific">Salmonella typhimurium (strain LT2 / SGSC1412 / ATCC 700720)</name>
    <dbReference type="NCBI Taxonomy" id="99287"/>
    <lineage>
        <taxon>Bacteria</taxon>
        <taxon>Pseudomonadati</taxon>
        <taxon>Pseudomonadota</taxon>
        <taxon>Gammaproteobacteria</taxon>
        <taxon>Enterobacterales</taxon>
        <taxon>Enterobacteriaceae</taxon>
        <taxon>Salmonella</taxon>
    </lineage>
</organism>
<reference key="1">
    <citation type="journal article" date="2001" name="Nature">
        <title>Complete genome sequence of Salmonella enterica serovar Typhimurium LT2.</title>
        <authorList>
            <person name="McClelland M."/>
            <person name="Sanderson K.E."/>
            <person name="Spieth J."/>
            <person name="Clifton S.W."/>
            <person name="Latreille P."/>
            <person name="Courtney L."/>
            <person name="Porwollik S."/>
            <person name="Ali J."/>
            <person name="Dante M."/>
            <person name="Du F."/>
            <person name="Hou S."/>
            <person name="Layman D."/>
            <person name="Leonard S."/>
            <person name="Nguyen C."/>
            <person name="Scott K."/>
            <person name="Holmes A."/>
            <person name="Grewal N."/>
            <person name="Mulvaney E."/>
            <person name="Ryan E."/>
            <person name="Sun H."/>
            <person name="Florea L."/>
            <person name="Miller W."/>
            <person name="Stoneking T."/>
            <person name="Nhan M."/>
            <person name="Waterston R."/>
            <person name="Wilson R.K."/>
        </authorList>
    </citation>
    <scope>NUCLEOTIDE SEQUENCE [LARGE SCALE GENOMIC DNA]</scope>
    <source>
        <strain>LT2 / SGSC1412 / ATCC 700720</strain>
    </source>
</reference>
<reference evidence="7 8 9" key="2">
    <citation type="journal article" date="2008" name="Protein Sci.">
        <title>Crystal structure of RimI from Salmonella typhimurium LT2, the GNAT responsible for N(alpha)-acetylation of ribosomal protein S18.</title>
        <authorList>
            <person name="Vetting M.W."/>
            <person name="Bareich D.C."/>
            <person name="Yu M."/>
            <person name="Blanchard J.S."/>
        </authorList>
    </citation>
    <scope>X-RAY CRYSTALLOGRAPHY (2.40 ANGSTROMS) IN COMPLEXES WITH COA; ACETYL-COA AND BISUBSTRATE INHIBITOR</scope>
    <scope>FUNCTION</scope>
    <scope>CATALYTIC ACTIVITY</scope>
</reference>
<comment type="function">
    <text evidence="1 2">Acetylates the N-terminal alanine of ribosomal protein bS18.</text>
</comment>
<comment type="catalytic activity">
    <reaction evidence="1 2">
        <text>N-terminal L-alanyl-[ribosomal protein bS18] + acetyl-CoA = N-terminal N(alpha)-acetyl-L-alanyl-[ribosomal protein bS18] + CoA + H(+)</text>
        <dbReference type="Rhea" id="RHEA:43756"/>
        <dbReference type="Rhea" id="RHEA-COMP:10676"/>
        <dbReference type="Rhea" id="RHEA-COMP:10677"/>
        <dbReference type="ChEBI" id="CHEBI:15378"/>
        <dbReference type="ChEBI" id="CHEBI:57287"/>
        <dbReference type="ChEBI" id="CHEBI:57288"/>
        <dbReference type="ChEBI" id="CHEBI:64718"/>
        <dbReference type="ChEBI" id="CHEBI:83683"/>
        <dbReference type="EC" id="2.3.1.266"/>
    </reaction>
</comment>
<comment type="subcellular location">
    <subcellularLocation>
        <location evidence="1 4">Cytoplasm</location>
    </subcellularLocation>
</comment>
<comment type="similarity">
    <text evidence="1 4">Belongs to the acetyltransferase family. RimI subfamily.</text>
</comment>
<accession>Q8ZJW4</accession>
<gene>
    <name evidence="1 3" type="primary">rimI</name>
    <name evidence="6" type="ordered locus">STM4558</name>
</gene>
<protein>
    <recommendedName>
        <fullName evidence="1 4">[Ribosomal protein bS18]-alanine N-acetyltransferase</fullName>
        <ecNumber evidence="1 2">2.3.1.266</ecNumber>
    </recommendedName>
</protein>
<name>RIMI_SALTY</name>
<evidence type="ECO:0000255" key="1">
    <source>
        <dbReference type="HAMAP-Rule" id="MF_02210"/>
    </source>
</evidence>
<evidence type="ECO:0000269" key="2">
    <source>
    </source>
</evidence>
<evidence type="ECO:0000303" key="3">
    <source>
    </source>
</evidence>
<evidence type="ECO:0000305" key="4"/>
<evidence type="ECO:0000305" key="5">
    <source>
    </source>
</evidence>
<evidence type="ECO:0000312" key="6">
    <source>
        <dbReference type="EMBL" id="AAL23373.1"/>
    </source>
</evidence>
<evidence type="ECO:0007744" key="7">
    <source>
        <dbReference type="PDB" id="2CNM"/>
    </source>
</evidence>
<evidence type="ECO:0007744" key="8">
    <source>
        <dbReference type="PDB" id="2CNS"/>
    </source>
</evidence>
<evidence type="ECO:0007744" key="9">
    <source>
        <dbReference type="PDB" id="2CNT"/>
    </source>
</evidence>
<evidence type="ECO:0007829" key="10">
    <source>
        <dbReference type="PDB" id="2CNT"/>
    </source>
</evidence>